<accession>A7FH52</accession>
<comment type="function">
    <text evidence="1">Catalyzes the phosphorylation of N-acetyl-D-glucosamine (GlcNAc) derived from cell-wall degradation, yielding GlcNAc-6-P.</text>
</comment>
<comment type="catalytic activity">
    <reaction evidence="1">
        <text>N-acetyl-D-glucosamine + ATP = N-acetyl-D-glucosamine 6-phosphate + ADP + H(+)</text>
        <dbReference type="Rhea" id="RHEA:17417"/>
        <dbReference type="ChEBI" id="CHEBI:15378"/>
        <dbReference type="ChEBI" id="CHEBI:30616"/>
        <dbReference type="ChEBI" id="CHEBI:57513"/>
        <dbReference type="ChEBI" id="CHEBI:456216"/>
        <dbReference type="ChEBI" id="CHEBI:506227"/>
        <dbReference type="EC" id="2.7.1.59"/>
    </reaction>
</comment>
<comment type="pathway">
    <text evidence="1">Cell wall biogenesis; peptidoglycan recycling.</text>
</comment>
<comment type="similarity">
    <text evidence="1">Belongs to the ROK (NagC/XylR) family. NagK subfamily.</text>
</comment>
<name>NAGK_YERP3</name>
<organism>
    <name type="scientific">Yersinia pseudotuberculosis serotype O:1b (strain IP 31758)</name>
    <dbReference type="NCBI Taxonomy" id="349747"/>
    <lineage>
        <taxon>Bacteria</taxon>
        <taxon>Pseudomonadati</taxon>
        <taxon>Pseudomonadota</taxon>
        <taxon>Gammaproteobacteria</taxon>
        <taxon>Enterobacterales</taxon>
        <taxon>Yersiniaceae</taxon>
        <taxon>Yersinia</taxon>
    </lineage>
</organism>
<proteinExistence type="inferred from homology"/>
<reference key="1">
    <citation type="journal article" date="2007" name="PLoS Genet.">
        <title>The complete genome sequence of Yersinia pseudotuberculosis IP31758, the causative agent of Far East scarlet-like fever.</title>
        <authorList>
            <person name="Eppinger M."/>
            <person name="Rosovitz M.J."/>
            <person name="Fricke W.F."/>
            <person name="Rasko D.A."/>
            <person name="Kokorina G."/>
            <person name="Fayolle C."/>
            <person name="Lindler L.E."/>
            <person name="Carniel E."/>
            <person name="Ravel J."/>
        </authorList>
    </citation>
    <scope>NUCLEOTIDE SEQUENCE [LARGE SCALE GENOMIC DNA]</scope>
    <source>
        <strain>IP 31758</strain>
    </source>
</reference>
<dbReference type="EC" id="2.7.1.59" evidence="1"/>
<dbReference type="EMBL" id="CP000720">
    <property type="protein sequence ID" value="ABS48486.1"/>
    <property type="molecule type" value="Genomic_DNA"/>
</dbReference>
<dbReference type="RefSeq" id="WP_012104978.1">
    <property type="nucleotide sequence ID" value="NC_009708.1"/>
</dbReference>
<dbReference type="SMR" id="A7FH52"/>
<dbReference type="KEGG" id="ypi:YpsIP31758_1603"/>
<dbReference type="HOGENOM" id="CLU_036604_0_3_6"/>
<dbReference type="UniPathway" id="UPA00544"/>
<dbReference type="Proteomes" id="UP000002412">
    <property type="component" value="Chromosome"/>
</dbReference>
<dbReference type="GO" id="GO:0005524">
    <property type="term" value="F:ATP binding"/>
    <property type="evidence" value="ECO:0007669"/>
    <property type="project" value="UniProtKB-UniRule"/>
</dbReference>
<dbReference type="GO" id="GO:0045127">
    <property type="term" value="F:N-acetylglucosamine kinase activity"/>
    <property type="evidence" value="ECO:0007669"/>
    <property type="project" value="UniProtKB-UniRule"/>
</dbReference>
<dbReference type="GO" id="GO:0008270">
    <property type="term" value="F:zinc ion binding"/>
    <property type="evidence" value="ECO:0007669"/>
    <property type="project" value="UniProtKB-UniRule"/>
</dbReference>
<dbReference type="GO" id="GO:0006044">
    <property type="term" value="P:N-acetylglucosamine metabolic process"/>
    <property type="evidence" value="ECO:0007669"/>
    <property type="project" value="UniProtKB-UniRule"/>
</dbReference>
<dbReference type="GO" id="GO:0009254">
    <property type="term" value="P:peptidoglycan turnover"/>
    <property type="evidence" value="ECO:0007669"/>
    <property type="project" value="UniProtKB-UniRule"/>
</dbReference>
<dbReference type="CDD" id="cd24057">
    <property type="entry name" value="ASKHA_NBD_ROK_NAGK"/>
    <property type="match status" value="1"/>
</dbReference>
<dbReference type="FunFam" id="3.30.420.40:FF:000049">
    <property type="entry name" value="N-acetyl-D-glucosamine kinase"/>
    <property type="match status" value="1"/>
</dbReference>
<dbReference type="FunFam" id="3.30.420.40:FF:000051">
    <property type="entry name" value="N-acetyl-D-glucosamine kinase"/>
    <property type="match status" value="1"/>
</dbReference>
<dbReference type="Gene3D" id="3.30.420.40">
    <property type="match status" value="2"/>
</dbReference>
<dbReference type="HAMAP" id="MF_01271">
    <property type="entry name" value="GlcNAc_kinase"/>
    <property type="match status" value="1"/>
</dbReference>
<dbReference type="InterPro" id="IPR043129">
    <property type="entry name" value="ATPase_NBD"/>
</dbReference>
<dbReference type="InterPro" id="IPR023505">
    <property type="entry name" value="N-acetyl-D-glucosamine_kinase"/>
</dbReference>
<dbReference type="InterPro" id="IPR000600">
    <property type="entry name" value="ROK"/>
</dbReference>
<dbReference type="InterPro" id="IPR049874">
    <property type="entry name" value="ROK_cs"/>
</dbReference>
<dbReference type="NCBIfam" id="NF009835">
    <property type="entry name" value="PRK13310.1"/>
    <property type="match status" value="1"/>
</dbReference>
<dbReference type="NCBIfam" id="NF009836">
    <property type="entry name" value="PRK13311.1"/>
    <property type="match status" value="1"/>
</dbReference>
<dbReference type="PANTHER" id="PTHR18964:SF162">
    <property type="entry name" value="N-ACETYL-D-GLUCOSAMINE KINASE"/>
    <property type="match status" value="1"/>
</dbReference>
<dbReference type="PANTHER" id="PTHR18964">
    <property type="entry name" value="ROK (REPRESSOR, ORF, KINASE) FAMILY"/>
    <property type="match status" value="1"/>
</dbReference>
<dbReference type="Pfam" id="PF00480">
    <property type="entry name" value="ROK"/>
    <property type="match status" value="1"/>
</dbReference>
<dbReference type="SUPFAM" id="SSF53067">
    <property type="entry name" value="Actin-like ATPase domain"/>
    <property type="match status" value="1"/>
</dbReference>
<dbReference type="PROSITE" id="PS01125">
    <property type="entry name" value="ROK"/>
    <property type="match status" value="1"/>
</dbReference>
<feature type="chain" id="PRO_1000067381" description="N-acetyl-D-glucosamine kinase">
    <location>
        <begin position="1"/>
        <end position="304"/>
    </location>
</feature>
<feature type="binding site" evidence="1">
    <location>
        <begin position="4"/>
        <end position="11"/>
    </location>
    <ligand>
        <name>ATP</name>
        <dbReference type="ChEBI" id="CHEBI:30616"/>
    </ligand>
</feature>
<feature type="binding site" evidence="1">
    <location>
        <begin position="133"/>
        <end position="140"/>
    </location>
    <ligand>
        <name>ATP</name>
        <dbReference type="ChEBI" id="CHEBI:30616"/>
    </ligand>
</feature>
<feature type="binding site" evidence="1">
    <location>
        <position position="157"/>
    </location>
    <ligand>
        <name>Zn(2+)</name>
        <dbReference type="ChEBI" id="CHEBI:29105"/>
    </ligand>
</feature>
<feature type="binding site" evidence="1">
    <location>
        <position position="177"/>
    </location>
    <ligand>
        <name>Zn(2+)</name>
        <dbReference type="ChEBI" id="CHEBI:29105"/>
    </ligand>
</feature>
<feature type="binding site" evidence="1">
    <location>
        <position position="179"/>
    </location>
    <ligand>
        <name>Zn(2+)</name>
        <dbReference type="ChEBI" id="CHEBI:29105"/>
    </ligand>
</feature>
<feature type="binding site" evidence="1">
    <location>
        <position position="184"/>
    </location>
    <ligand>
        <name>Zn(2+)</name>
        <dbReference type="ChEBI" id="CHEBI:29105"/>
    </ligand>
</feature>
<protein>
    <recommendedName>
        <fullName evidence="1">N-acetyl-D-glucosamine kinase</fullName>
        <ecNumber evidence="1">2.7.1.59</ecNumber>
    </recommendedName>
    <alternativeName>
        <fullName evidence="1">GlcNAc kinase</fullName>
    </alternativeName>
</protein>
<gene>
    <name evidence="1" type="primary">nagK</name>
    <name type="ordered locus">YpsIP31758_1603</name>
</gene>
<sequence>MYYGFDMGGTKIELGVFDENLQRIWHKRVPTPREDYPQLLQILRDLTEEADTYCGVQGSVGIGIPGLPNADDGTVFTANVPSAMGQPLQADLSRLIQREVRIDNDANCFALSEAWDPEFRTYPTVLGLILGTGVGGGLIVNGSIVSGRNHITGEFGHFRLPVDALDILGADIPHVPCGCGHRGCIENYISGRGFEWMYSHFYQHTLPATDIIAHYAAGEPKAVAHVERFMDVLAVCLGNLLTMLDPHLVVVGGGLSNFEKIYQELPKRLPAHLLRVARLPRIEKARYGDSGGVRGAAFLHLAEK</sequence>
<keyword id="KW-0067">ATP-binding</keyword>
<keyword id="KW-0119">Carbohydrate metabolism</keyword>
<keyword id="KW-0418">Kinase</keyword>
<keyword id="KW-0479">Metal-binding</keyword>
<keyword id="KW-0547">Nucleotide-binding</keyword>
<keyword id="KW-0808">Transferase</keyword>
<keyword id="KW-0862">Zinc</keyword>
<evidence type="ECO:0000255" key="1">
    <source>
        <dbReference type="HAMAP-Rule" id="MF_01271"/>
    </source>
</evidence>